<organism>
    <name type="scientific">Bacteroides fragilis (strain ATCC 25285 / DSM 2151 / CCUG 4856 / JCM 11019 / LMG 10263 / NCTC 9343 / Onslow / VPI 2553 / EN-2)</name>
    <dbReference type="NCBI Taxonomy" id="272559"/>
    <lineage>
        <taxon>Bacteria</taxon>
        <taxon>Pseudomonadati</taxon>
        <taxon>Bacteroidota</taxon>
        <taxon>Bacteroidia</taxon>
        <taxon>Bacteroidales</taxon>
        <taxon>Bacteroidaceae</taxon>
        <taxon>Bacteroides</taxon>
    </lineage>
</organism>
<protein>
    <recommendedName>
        <fullName evidence="1">Small ribosomal subunit protein bS18</fullName>
    </recommendedName>
    <alternativeName>
        <fullName evidence="2">30S ribosomal protein S18</fullName>
    </alternativeName>
</protein>
<sequence>MAQQVQSEIRYLTPPSVDVKKKKYCRFKKSGIKYIDYKDPEFLKKFLNEQGKILPRRITGTSLKFQRRIAQAVKRARHLALLPFVTDMMK</sequence>
<reference key="1">
    <citation type="journal article" date="2005" name="Science">
        <title>Extensive DNA inversions in the B. fragilis genome control variable gene expression.</title>
        <authorList>
            <person name="Cerdeno-Tarraga A.-M."/>
            <person name="Patrick S."/>
            <person name="Crossman L.C."/>
            <person name="Blakely G."/>
            <person name="Abratt V."/>
            <person name="Lennard N."/>
            <person name="Poxton I."/>
            <person name="Duerden B."/>
            <person name="Harris B."/>
            <person name="Quail M.A."/>
            <person name="Barron A."/>
            <person name="Clark L."/>
            <person name="Corton C."/>
            <person name="Doggett J."/>
            <person name="Holden M.T.G."/>
            <person name="Larke N."/>
            <person name="Line A."/>
            <person name="Lord A."/>
            <person name="Norbertczak H."/>
            <person name="Ormond D."/>
            <person name="Price C."/>
            <person name="Rabbinowitsch E."/>
            <person name="Woodward J."/>
            <person name="Barrell B.G."/>
            <person name="Parkhill J."/>
        </authorList>
    </citation>
    <scope>NUCLEOTIDE SEQUENCE [LARGE SCALE GENOMIC DNA]</scope>
    <source>
        <strain>ATCC 25285 / DSM 2151 / CCUG 4856 / JCM 11019 / LMG 10263 / NCTC 9343 / Onslow / VPI 2553 / EN-2</strain>
    </source>
</reference>
<comment type="function">
    <text evidence="1">Binds as a heterodimer with protein bS6 to the central domain of the 16S rRNA, where it helps stabilize the platform of the 30S subunit.</text>
</comment>
<comment type="subunit">
    <text evidence="1">Part of the 30S ribosomal subunit. Forms a tight heterodimer with protein bS6.</text>
</comment>
<comment type="similarity">
    <text evidence="1">Belongs to the bacterial ribosomal protein bS18 family.</text>
</comment>
<proteinExistence type="inferred from homology"/>
<keyword id="KW-0687">Ribonucleoprotein</keyword>
<keyword id="KW-0689">Ribosomal protein</keyword>
<keyword id="KW-0694">RNA-binding</keyword>
<keyword id="KW-0699">rRNA-binding</keyword>
<feature type="chain" id="PRO_1000003443" description="Small ribosomal subunit protein bS18">
    <location>
        <begin position="1"/>
        <end position="90"/>
    </location>
</feature>
<gene>
    <name evidence="1" type="primary">rpsR</name>
    <name type="ordered locus">BF3631</name>
</gene>
<evidence type="ECO:0000255" key="1">
    <source>
        <dbReference type="HAMAP-Rule" id="MF_00270"/>
    </source>
</evidence>
<evidence type="ECO:0000305" key="2"/>
<dbReference type="EMBL" id="CR626927">
    <property type="protein sequence ID" value="CAH09312.1"/>
    <property type="molecule type" value="Genomic_DNA"/>
</dbReference>
<dbReference type="RefSeq" id="WP_005790946.1">
    <property type="nucleotide sequence ID" value="NZ_UFTH01000001.1"/>
</dbReference>
<dbReference type="SMR" id="Q5L9B6"/>
<dbReference type="PaxDb" id="272559-BF9343_3531"/>
<dbReference type="GeneID" id="60369262"/>
<dbReference type="KEGG" id="bfs:BF9343_3531"/>
<dbReference type="eggNOG" id="COG0238">
    <property type="taxonomic scope" value="Bacteria"/>
</dbReference>
<dbReference type="HOGENOM" id="CLU_148710_2_0_10"/>
<dbReference type="Proteomes" id="UP000006731">
    <property type="component" value="Chromosome"/>
</dbReference>
<dbReference type="GO" id="GO:0022627">
    <property type="term" value="C:cytosolic small ribosomal subunit"/>
    <property type="evidence" value="ECO:0007669"/>
    <property type="project" value="TreeGrafter"/>
</dbReference>
<dbReference type="GO" id="GO:0070181">
    <property type="term" value="F:small ribosomal subunit rRNA binding"/>
    <property type="evidence" value="ECO:0007669"/>
    <property type="project" value="TreeGrafter"/>
</dbReference>
<dbReference type="GO" id="GO:0003735">
    <property type="term" value="F:structural constituent of ribosome"/>
    <property type="evidence" value="ECO:0007669"/>
    <property type="project" value="InterPro"/>
</dbReference>
<dbReference type="GO" id="GO:0006412">
    <property type="term" value="P:translation"/>
    <property type="evidence" value="ECO:0007669"/>
    <property type="project" value="UniProtKB-UniRule"/>
</dbReference>
<dbReference type="FunFam" id="4.10.640.10:FF:000004">
    <property type="entry name" value="30S ribosomal protein S18"/>
    <property type="match status" value="1"/>
</dbReference>
<dbReference type="Gene3D" id="4.10.640.10">
    <property type="entry name" value="Ribosomal protein S18"/>
    <property type="match status" value="1"/>
</dbReference>
<dbReference type="HAMAP" id="MF_00270">
    <property type="entry name" value="Ribosomal_bS18"/>
    <property type="match status" value="1"/>
</dbReference>
<dbReference type="InterPro" id="IPR001648">
    <property type="entry name" value="Ribosomal_bS18"/>
</dbReference>
<dbReference type="InterPro" id="IPR018275">
    <property type="entry name" value="Ribosomal_bS18_CS"/>
</dbReference>
<dbReference type="InterPro" id="IPR036870">
    <property type="entry name" value="Ribosomal_bS18_sf"/>
</dbReference>
<dbReference type="NCBIfam" id="TIGR00165">
    <property type="entry name" value="S18"/>
    <property type="match status" value="1"/>
</dbReference>
<dbReference type="PANTHER" id="PTHR13479">
    <property type="entry name" value="30S RIBOSOMAL PROTEIN S18"/>
    <property type="match status" value="1"/>
</dbReference>
<dbReference type="PANTHER" id="PTHR13479:SF40">
    <property type="entry name" value="SMALL RIBOSOMAL SUBUNIT PROTEIN BS18M"/>
    <property type="match status" value="1"/>
</dbReference>
<dbReference type="Pfam" id="PF01084">
    <property type="entry name" value="Ribosomal_S18"/>
    <property type="match status" value="1"/>
</dbReference>
<dbReference type="PRINTS" id="PR00974">
    <property type="entry name" value="RIBOSOMALS18"/>
</dbReference>
<dbReference type="SUPFAM" id="SSF46911">
    <property type="entry name" value="Ribosomal protein S18"/>
    <property type="match status" value="1"/>
</dbReference>
<dbReference type="PROSITE" id="PS00057">
    <property type="entry name" value="RIBOSOMAL_S18"/>
    <property type="match status" value="1"/>
</dbReference>
<name>RS18_BACFN</name>
<accession>Q5L9B6</accession>